<comment type="function">
    <text>Member of the two-component regulatory system TorS/TorR involved in the anaerobic utilization of trimethylamine-N-oxide (TMAO). Detects the presence of TMAO in the medium and, in response, activates TorR via a four-step phosphorelay. When TMAO is removed, TorS can dephosphorylate TorR, probably by a reverse phosphorelay involving His-860 and Asp-733.</text>
</comment>
<comment type="catalytic activity">
    <reaction>
        <text>ATP + protein L-histidine = ADP + protein N-phospho-L-histidine.</text>
        <dbReference type="EC" id="2.7.13.3"/>
    </reaction>
</comment>
<comment type="activity regulation">
    <text>Inhibited by TorC apocytochrome.</text>
</comment>
<comment type="subunit">
    <text>May form homomultimers. Seems to interact with TorT and TorC apocytochrome.</text>
</comment>
<comment type="interaction">
    <interactant intactId="EBI-9149134">
        <id>P39453</id>
    </interactant>
    <interactant intactId="EBI-9149134">
        <id>P39453</id>
        <label>torS</label>
    </interactant>
    <organismsDiffer>false</organismsDiffer>
    <experiments>2</experiments>
</comment>
<comment type="subcellular location">
    <subcellularLocation>
        <location evidence="6">Cell inner membrane</location>
        <topology evidence="6">Multi-pass membrane protein</topology>
    </subcellularLocation>
</comment>
<comment type="PTM">
    <text>Activation requires a sequential transfer of a phosphate group from a His in the primary transmitter domain, to an Asp in the receiver domain and to a His in the secondary transmitter domain.</text>
</comment>
<comment type="sequence caution" evidence="8">
    <conflict type="erroneous initiation">
        <sequence resource="EMBL-CDS" id="CAA63920"/>
    </conflict>
    <text>Truncated N-terminus.</text>
</comment>
<name>TORS_ECOLI</name>
<gene>
    <name type="primary">torS</name>
    <name type="synonym">yccI</name>
    <name type="ordered locus">b0993</name>
    <name type="ordered locus">JW5135</name>
</gene>
<sequence length="914" mass="101024">MNLTLTRRLWMGFALMALLTLTSTLVGWYNLRFISQVEKDNTQALIPTMNMARQLSEASAWELFAAQNLTSADNEKMWQAQGRMLTAQSLKINALLQALREQGFDTTAIEQQEQEISRSLRQQGELVGQRLQLRQQQQQLSQQIVAAADEIARLAQGQANNATTSAGATQAGIYDLIEQDQRQAAESALDRLIDIDLEYVNQMNELRLSALRVQQMVMNLGLEQIQKNAPTLEKQLNNAVKILQRRQIRIEDPGVRAQVATTLTTVSQYSDLLALYQQDSEISNHLQTLAQNNIAQFAQFSSEVSQLVDTIELRNQHGLAHLEKASARGQYSLLLLGMVSLCALILILWRVVYRSVTRPLAEQTQALQRLLDGDIDSPFPETAGVRELDTIGRLMDAFRSNVHALNRHREQLAAQVKARTAELQELVIEHRQARAEAEKASQAKSAFLAAMSHEIRTPLYGILGTAQLLADNPALNAQRDDLRAITDSGESLLTILNDILDYSAIEAGGKNVSVSDEPFEPRPLLESTLQLMSGRVKGRPIRLATAIADDMPCALMGDPRRIRQVITNLLSNALRFTDEGYIILRSRTDGEQWLVEVEDSGCGIDPAKLAEIFQPFVQVSGKRGGTGLGLTISSRLAQAMGGELSATSTPEVGSCFCLRLPLRVATAPVPKTVNQAVRLDGLRLLLIEDNPLTQRITIEMLKTSGAQIVAVGNAAQALETLQNSEPFAAALVDFDLPDIDGITLARQLAQQYPSLVLIGFSAHVIDETLRQRTSSLFRGIIPKPVPREVLGQLLAHYLQLQVNNDQSLDVSQLNEDAQLMGTEKIHEWLVLFTQHALPLLDEIDIARASQDSEKIKRAAHQLKSSCSSLGMHIASQLCAQLEQQPLSAPLPHEEITRSVAALEAWLHKKDLNAI</sequence>
<accession>P39453</accession>
<accession>P75887</accession>
<evidence type="ECO:0000255" key="1"/>
<evidence type="ECO:0000255" key="2">
    <source>
        <dbReference type="PROSITE-ProRule" id="PRU00102"/>
    </source>
</evidence>
<evidence type="ECO:0000255" key="3">
    <source>
        <dbReference type="PROSITE-ProRule" id="PRU00107"/>
    </source>
</evidence>
<evidence type="ECO:0000255" key="4">
    <source>
        <dbReference type="PROSITE-ProRule" id="PRU00110"/>
    </source>
</evidence>
<evidence type="ECO:0000255" key="5">
    <source>
        <dbReference type="PROSITE-ProRule" id="PRU00169"/>
    </source>
</evidence>
<evidence type="ECO:0000269" key="6">
    <source>
    </source>
</evidence>
<evidence type="ECO:0000269" key="7">
    <source>
    </source>
</evidence>
<evidence type="ECO:0000305" key="8"/>
<evidence type="ECO:0007829" key="9">
    <source>
        <dbReference type="PDB" id="3I9W"/>
    </source>
</evidence>
<protein>
    <recommendedName>
        <fullName>Sensor protein TorS</fullName>
        <ecNumber>2.7.13.3</ecNumber>
    </recommendedName>
</protein>
<proteinExistence type="evidence at protein level"/>
<keyword id="KW-0002">3D-structure</keyword>
<keyword id="KW-0067">ATP-binding</keyword>
<keyword id="KW-0997">Cell inner membrane</keyword>
<keyword id="KW-1003">Cell membrane</keyword>
<keyword id="KW-0418">Kinase</keyword>
<keyword id="KW-0472">Membrane</keyword>
<keyword id="KW-0547">Nucleotide-binding</keyword>
<keyword id="KW-0597">Phosphoprotein</keyword>
<keyword id="KW-1185">Reference proteome</keyword>
<keyword id="KW-0808">Transferase</keyword>
<keyword id="KW-0812">Transmembrane</keyword>
<keyword id="KW-1133">Transmembrane helix</keyword>
<keyword id="KW-0902">Two-component regulatory system</keyword>
<organism>
    <name type="scientific">Escherichia coli (strain K12)</name>
    <dbReference type="NCBI Taxonomy" id="83333"/>
    <lineage>
        <taxon>Bacteria</taxon>
        <taxon>Pseudomonadati</taxon>
        <taxon>Pseudomonadota</taxon>
        <taxon>Gammaproteobacteria</taxon>
        <taxon>Enterobacterales</taxon>
        <taxon>Enterobacteriaceae</taxon>
        <taxon>Escherichia</taxon>
    </lineage>
</organism>
<dbReference type="EC" id="2.7.13.3"/>
<dbReference type="EMBL" id="X94231">
    <property type="protein sequence ID" value="CAA63920.1"/>
    <property type="status" value="ALT_INIT"/>
    <property type="molecule type" value="Genomic_DNA"/>
</dbReference>
<dbReference type="EMBL" id="U00096">
    <property type="protein sequence ID" value="AAC74078.2"/>
    <property type="molecule type" value="Genomic_DNA"/>
</dbReference>
<dbReference type="EMBL" id="AP009048">
    <property type="protein sequence ID" value="BAA36135.2"/>
    <property type="molecule type" value="Genomic_DNA"/>
</dbReference>
<dbReference type="PIR" id="G64840">
    <property type="entry name" value="G64840"/>
</dbReference>
<dbReference type="RefSeq" id="NP_415513.2">
    <property type="nucleotide sequence ID" value="NC_000913.3"/>
</dbReference>
<dbReference type="RefSeq" id="WP_001300633.1">
    <property type="nucleotide sequence ID" value="NZ_LN832404.1"/>
</dbReference>
<dbReference type="PDB" id="3I9W">
    <property type="method" value="X-ray"/>
    <property type="resolution" value="2.70 A"/>
    <property type="chains" value="A=35-320"/>
</dbReference>
<dbReference type="PDBsum" id="3I9W"/>
<dbReference type="SMR" id="P39453"/>
<dbReference type="BioGRID" id="4262839">
    <property type="interactions" value="4"/>
</dbReference>
<dbReference type="BioGRID" id="849969">
    <property type="interactions" value="1"/>
</dbReference>
<dbReference type="DIP" id="DIP-11017N"/>
<dbReference type="FunCoup" id="P39453">
    <property type="interactions" value="323"/>
</dbReference>
<dbReference type="IntAct" id="P39453">
    <property type="interactions" value="1"/>
</dbReference>
<dbReference type="STRING" id="511145.b0993"/>
<dbReference type="iPTMnet" id="P39453"/>
<dbReference type="jPOST" id="P39453"/>
<dbReference type="PaxDb" id="511145-b0993"/>
<dbReference type="EnsemblBacteria" id="AAC74078">
    <property type="protein sequence ID" value="AAC74078"/>
    <property type="gene ID" value="b0993"/>
</dbReference>
<dbReference type="GeneID" id="945595"/>
<dbReference type="KEGG" id="ecj:JW5135"/>
<dbReference type="KEGG" id="eco:b0993"/>
<dbReference type="PATRIC" id="fig|511145.12.peg.1029"/>
<dbReference type="EchoBASE" id="EB2501"/>
<dbReference type="eggNOG" id="COG0784">
    <property type="taxonomic scope" value="Bacteria"/>
</dbReference>
<dbReference type="eggNOG" id="COG2198">
    <property type="taxonomic scope" value="Bacteria"/>
</dbReference>
<dbReference type="eggNOG" id="COG2205">
    <property type="taxonomic scope" value="Bacteria"/>
</dbReference>
<dbReference type="HOGENOM" id="CLU_000445_40_1_6"/>
<dbReference type="InParanoid" id="P39453"/>
<dbReference type="OMA" id="VMLDIQL"/>
<dbReference type="OrthoDB" id="9770795at2"/>
<dbReference type="PhylomeDB" id="P39453"/>
<dbReference type="BioCyc" id="EcoCyc:TORS-MONOMER"/>
<dbReference type="BioCyc" id="MetaCyc:TORS-MONOMER"/>
<dbReference type="BRENDA" id="2.7.13.3">
    <property type="organism ID" value="2026"/>
</dbReference>
<dbReference type="EvolutionaryTrace" id="P39453"/>
<dbReference type="PRO" id="PR:P39453"/>
<dbReference type="Proteomes" id="UP000000625">
    <property type="component" value="Chromosome"/>
</dbReference>
<dbReference type="GO" id="GO:0005886">
    <property type="term" value="C:plasma membrane"/>
    <property type="evidence" value="ECO:0000314"/>
    <property type="project" value="EcoCyc"/>
</dbReference>
<dbReference type="GO" id="GO:0005524">
    <property type="term" value="F:ATP binding"/>
    <property type="evidence" value="ECO:0007669"/>
    <property type="project" value="UniProtKB-KW"/>
</dbReference>
<dbReference type="GO" id="GO:0042802">
    <property type="term" value="F:identical protein binding"/>
    <property type="evidence" value="ECO:0000353"/>
    <property type="project" value="IntAct"/>
</dbReference>
<dbReference type="GO" id="GO:0004721">
    <property type="term" value="F:phosphoprotein phosphatase activity"/>
    <property type="evidence" value="ECO:0000314"/>
    <property type="project" value="EcoCyc"/>
</dbReference>
<dbReference type="GO" id="GO:0000155">
    <property type="term" value="F:phosphorelay sensor kinase activity"/>
    <property type="evidence" value="ECO:0000315"/>
    <property type="project" value="EcoCyc"/>
</dbReference>
<dbReference type="GO" id="GO:0042803">
    <property type="term" value="F:protein homodimerization activity"/>
    <property type="evidence" value="ECO:0000314"/>
    <property type="project" value="EcoCyc"/>
</dbReference>
<dbReference type="GO" id="GO:0009061">
    <property type="term" value="P:anaerobic respiration"/>
    <property type="evidence" value="ECO:0000315"/>
    <property type="project" value="EcoCyc"/>
</dbReference>
<dbReference type="GO" id="GO:0000160">
    <property type="term" value="P:phosphorelay signal transduction system"/>
    <property type="evidence" value="ECO:0000315"/>
    <property type="project" value="EcoCyc"/>
</dbReference>
<dbReference type="CDD" id="cd16922">
    <property type="entry name" value="HATPase_EvgS-ArcB-TorS-like"/>
    <property type="match status" value="1"/>
</dbReference>
<dbReference type="CDD" id="cd00082">
    <property type="entry name" value="HisKA"/>
    <property type="match status" value="1"/>
</dbReference>
<dbReference type="CDD" id="cd00088">
    <property type="entry name" value="HPT"/>
    <property type="match status" value="1"/>
</dbReference>
<dbReference type="CDD" id="cd17546">
    <property type="entry name" value="REC_hyHK_CKI1_RcsC-like"/>
    <property type="match status" value="1"/>
</dbReference>
<dbReference type="CDD" id="cd16172">
    <property type="entry name" value="TorS_sensor_domain"/>
    <property type="match status" value="1"/>
</dbReference>
<dbReference type="FunFam" id="1.10.287.130:FF:000065">
    <property type="entry name" value="Histidine kinase"/>
    <property type="match status" value="1"/>
</dbReference>
<dbReference type="FunFam" id="1.20.58.920:FF:000001">
    <property type="entry name" value="Histidine kinase"/>
    <property type="match status" value="1"/>
</dbReference>
<dbReference type="Gene3D" id="1.10.287.130">
    <property type="match status" value="1"/>
</dbReference>
<dbReference type="Gene3D" id="1.20.58.920">
    <property type="match status" value="1"/>
</dbReference>
<dbReference type="Gene3D" id="3.40.50.2300">
    <property type="match status" value="1"/>
</dbReference>
<dbReference type="Gene3D" id="6.10.340.10">
    <property type="match status" value="1"/>
</dbReference>
<dbReference type="Gene3D" id="3.30.565.10">
    <property type="entry name" value="Histidine kinase-like ATPase, C-terminal domain"/>
    <property type="match status" value="1"/>
</dbReference>
<dbReference type="Gene3D" id="1.20.120.160">
    <property type="entry name" value="HPT domain"/>
    <property type="match status" value="1"/>
</dbReference>
<dbReference type="InterPro" id="IPR011006">
    <property type="entry name" value="CheY-like_superfamily"/>
</dbReference>
<dbReference type="InterPro" id="IPR003660">
    <property type="entry name" value="HAMP_dom"/>
</dbReference>
<dbReference type="InterPro" id="IPR036890">
    <property type="entry name" value="HATPase_C_sf"/>
</dbReference>
<dbReference type="InterPro" id="IPR005467">
    <property type="entry name" value="His_kinase_dom"/>
</dbReference>
<dbReference type="InterPro" id="IPR003661">
    <property type="entry name" value="HisK_dim/P_dom"/>
</dbReference>
<dbReference type="InterPro" id="IPR036097">
    <property type="entry name" value="HisK_dim/P_sf"/>
</dbReference>
<dbReference type="InterPro" id="IPR036641">
    <property type="entry name" value="HPT_dom_sf"/>
</dbReference>
<dbReference type="InterPro" id="IPR037952">
    <property type="entry name" value="Sensor_TorS"/>
</dbReference>
<dbReference type="InterPro" id="IPR004358">
    <property type="entry name" value="Sig_transdc_His_kin-like_C"/>
</dbReference>
<dbReference type="InterPro" id="IPR008207">
    <property type="entry name" value="Sig_transdc_His_kin_Hpt_dom"/>
</dbReference>
<dbReference type="InterPro" id="IPR014302">
    <property type="entry name" value="Sig_transdc_His_kinase_TorS"/>
</dbReference>
<dbReference type="InterPro" id="IPR001789">
    <property type="entry name" value="Sig_transdc_resp-reg_receiver"/>
</dbReference>
<dbReference type="InterPro" id="IPR038188">
    <property type="entry name" value="TorS_sensor_sf"/>
</dbReference>
<dbReference type="NCBIfam" id="NF008543">
    <property type="entry name" value="PRK11466.1"/>
    <property type="match status" value="1"/>
</dbReference>
<dbReference type="NCBIfam" id="TIGR02956">
    <property type="entry name" value="TMAO_torS"/>
    <property type="match status" value="1"/>
</dbReference>
<dbReference type="PANTHER" id="PTHR43047:SF78">
    <property type="entry name" value="SENSORY_REGULATORY PROTEIN RPFC"/>
    <property type="match status" value="1"/>
</dbReference>
<dbReference type="PANTHER" id="PTHR43047">
    <property type="entry name" value="TWO-COMPONENT HISTIDINE PROTEIN KINASE"/>
    <property type="match status" value="1"/>
</dbReference>
<dbReference type="Pfam" id="PF00672">
    <property type="entry name" value="HAMP"/>
    <property type="match status" value="1"/>
</dbReference>
<dbReference type="Pfam" id="PF02518">
    <property type="entry name" value="HATPase_c"/>
    <property type="match status" value="1"/>
</dbReference>
<dbReference type="Pfam" id="PF00512">
    <property type="entry name" value="HisKA"/>
    <property type="match status" value="1"/>
</dbReference>
<dbReference type="Pfam" id="PF01627">
    <property type="entry name" value="Hpt"/>
    <property type="match status" value="1"/>
</dbReference>
<dbReference type="Pfam" id="PF00072">
    <property type="entry name" value="Response_reg"/>
    <property type="match status" value="1"/>
</dbReference>
<dbReference type="Pfam" id="PF21689">
    <property type="entry name" value="TorS_sensor_domain"/>
    <property type="match status" value="1"/>
</dbReference>
<dbReference type="PIRSF" id="PIRSF036437">
    <property type="entry name" value="HK_TorS"/>
    <property type="match status" value="1"/>
</dbReference>
<dbReference type="PRINTS" id="PR00344">
    <property type="entry name" value="BCTRLSENSOR"/>
</dbReference>
<dbReference type="SMART" id="SM00304">
    <property type="entry name" value="HAMP"/>
    <property type="match status" value="1"/>
</dbReference>
<dbReference type="SMART" id="SM00387">
    <property type="entry name" value="HATPase_c"/>
    <property type="match status" value="1"/>
</dbReference>
<dbReference type="SMART" id="SM00388">
    <property type="entry name" value="HisKA"/>
    <property type="match status" value="1"/>
</dbReference>
<dbReference type="SMART" id="SM00073">
    <property type="entry name" value="HPT"/>
    <property type="match status" value="1"/>
</dbReference>
<dbReference type="SMART" id="SM00448">
    <property type="entry name" value="REC"/>
    <property type="match status" value="1"/>
</dbReference>
<dbReference type="SUPFAM" id="SSF55874">
    <property type="entry name" value="ATPase domain of HSP90 chaperone/DNA topoisomerase II/histidine kinase"/>
    <property type="match status" value="1"/>
</dbReference>
<dbReference type="SUPFAM" id="SSF52172">
    <property type="entry name" value="CheY-like"/>
    <property type="match status" value="1"/>
</dbReference>
<dbReference type="SUPFAM" id="SSF47226">
    <property type="entry name" value="Histidine-containing phosphotransfer domain, HPT domain"/>
    <property type="match status" value="1"/>
</dbReference>
<dbReference type="SUPFAM" id="SSF47384">
    <property type="entry name" value="Homodimeric domain of signal transducing histidine kinase"/>
    <property type="match status" value="1"/>
</dbReference>
<dbReference type="PROSITE" id="PS50885">
    <property type="entry name" value="HAMP"/>
    <property type="match status" value="1"/>
</dbReference>
<dbReference type="PROSITE" id="PS50109">
    <property type="entry name" value="HIS_KIN"/>
    <property type="match status" value="1"/>
</dbReference>
<dbReference type="PROSITE" id="PS50894">
    <property type="entry name" value="HPT"/>
    <property type="match status" value="1"/>
</dbReference>
<dbReference type="PROSITE" id="PS50110">
    <property type="entry name" value="RESPONSE_REGULATORY"/>
    <property type="match status" value="1"/>
</dbReference>
<feature type="chain" id="PRO_0000074888" description="Sensor protein TorS">
    <location>
        <begin position="1"/>
        <end position="914"/>
    </location>
</feature>
<feature type="topological domain" description="Cytoplasmic" evidence="1">
    <location>
        <begin position="1"/>
        <end position="8"/>
    </location>
</feature>
<feature type="transmembrane region" description="Helical" evidence="1">
    <location>
        <begin position="9"/>
        <end position="29"/>
    </location>
</feature>
<feature type="topological domain" description="Periplasmic" evidence="1">
    <location>
        <begin position="30"/>
        <end position="332"/>
    </location>
</feature>
<feature type="transmembrane region" description="Helical" evidence="1">
    <location>
        <begin position="333"/>
        <end position="353"/>
    </location>
</feature>
<feature type="topological domain" description="Cytoplasmic" evidence="1">
    <location>
        <begin position="354"/>
        <end position="914"/>
    </location>
</feature>
<feature type="domain" description="HAMP" evidence="2">
    <location>
        <begin position="354"/>
        <end position="407"/>
    </location>
</feature>
<feature type="domain" description="Histidine kinase" evidence="3">
    <location>
        <begin position="450"/>
        <end position="664"/>
    </location>
</feature>
<feature type="domain" description="Response regulatory" evidence="5">
    <location>
        <begin position="683"/>
        <end position="798"/>
    </location>
</feature>
<feature type="domain" description="HPt" evidence="4">
    <location>
        <begin position="821"/>
        <end position="914"/>
    </location>
</feature>
<feature type="modified residue" description="Phosphohistidine; by autocatalysis" evidence="8">
    <location>
        <position position="453"/>
    </location>
</feature>
<feature type="modified residue" description="4-aspartylphosphate" evidence="8">
    <location>
        <position position="733"/>
    </location>
</feature>
<feature type="modified residue" description="Phosphohistidine" evidence="8">
    <location>
        <position position="860"/>
    </location>
</feature>
<feature type="sequence variant" description="In torS726; constitutively active.">
    <location>
        <begin position="295"/>
        <end position="297"/>
    </location>
</feature>
<feature type="sequence variant" description="In torS729; partial activation.">
    <original>H</original>
    <variation>L</variation>
    <location>
        <position position="408"/>
    </location>
</feature>
<feature type="sequence variant" description="In torS13; partial activation.">
    <original>A</original>
    <variation>P</variation>
    <location>
        <position position="414"/>
    </location>
</feature>
<feature type="mutagenesis site" description="Loss of activity." evidence="7">
    <original>H</original>
    <variation>Q</variation>
    <location>
        <position position="453"/>
    </location>
</feature>
<feature type="mutagenesis site" description="Loss of activity." evidence="7">
    <original>D</original>
    <variation>A</variation>
    <variation>E</variation>
    <location>
        <position position="733"/>
    </location>
</feature>
<feature type="mutagenesis site" description="Decrease in activity." evidence="7">
    <original>H</original>
    <variation>Q</variation>
    <location>
        <position position="860"/>
    </location>
</feature>
<feature type="sequence conflict" description="In Ref. 1; CAA63920." evidence="8" ref="1">
    <original>QR</original>
    <variation>HG</variation>
    <location>
        <begin position="771"/>
        <end position="772"/>
    </location>
</feature>
<feature type="helix" evidence="9">
    <location>
        <begin position="49"/>
        <end position="71"/>
    </location>
</feature>
<feature type="helix" evidence="9">
    <location>
        <begin position="75"/>
        <end position="100"/>
    </location>
</feature>
<feature type="turn" evidence="9">
    <location>
        <begin position="101"/>
        <end position="103"/>
    </location>
</feature>
<feature type="helix" evidence="9">
    <location>
        <begin position="107"/>
        <end position="173"/>
    </location>
</feature>
<feature type="turn" evidence="9">
    <location>
        <begin position="177"/>
        <end position="179"/>
    </location>
</feature>
<feature type="helix" evidence="9">
    <location>
        <begin position="182"/>
        <end position="218"/>
    </location>
</feature>
<feature type="helix" evidence="9">
    <location>
        <begin position="223"/>
        <end position="227"/>
    </location>
</feature>
<feature type="helix" evidence="9">
    <location>
        <begin position="229"/>
        <end position="247"/>
    </location>
</feature>
<feature type="helix" evidence="9">
    <location>
        <begin position="253"/>
        <end position="266"/>
    </location>
</feature>
<feature type="helix" evidence="9">
    <location>
        <begin position="269"/>
        <end position="313"/>
    </location>
</feature>
<reference key="1">
    <citation type="journal article" date="1996" name="Mol. Microbiol.">
        <title>An unorthodox sensor protein (TorS) mediates the induction of the tor structural genes in response to trimethylamine N-oxide in Escherichia coli.</title>
        <authorList>
            <person name="Jourlin C."/>
            <person name="Bengrine A."/>
            <person name="Chippaux M."/>
            <person name="Mejean V."/>
        </authorList>
    </citation>
    <scope>NUCLEOTIDE SEQUENCE [GENOMIC DNA]</scope>
    <scope>VARIANTS TORS13; TORS726 AND TORS729</scope>
    <source>
        <strain>K12 / MC4100 / ATCC 35695 / DSM 6574</strain>
    </source>
</reference>
<reference key="2">
    <citation type="journal article" date="1996" name="DNA Res.">
        <title>A 718-kb DNA sequence of the Escherichia coli K-12 genome corresponding to the 12.7-28.0 min region on the linkage map.</title>
        <authorList>
            <person name="Oshima T."/>
            <person name="Aiba H."/>
            <person name="Baba T."/>
            <person name="Fujita K."/>
            <person name="Hayashi K."/>
            <person name="Honjo A."/>
            <person name="Ikemoto K."/>
            <person name="Inada T."/>
            <person name="Itoh T."/>
            <person name="Kajihara M."/>
            <person name="Kanai K."/>
            <person name="Kashimoto K."/>
            <person name="Kimura S."/>
            <person name="Kitagawa M."/>
            <person name="Makino K."/>
            <person name="Masuda S."/>
            <person name="Miki T."/>
            <person name="Mizobuchi K."/>
            <person name="Mori H."/>
            <person name="Motomura K."/>
            <person name="Nakamura Y."/>
            <person name="Nashimoto H."/>
            <person name="Nishio Y."/>
            <person name="Saito N."/>
            <person name="Sampei G."/>
            <person name="Seki Y."/>
            <person name="Tagami H."/>
            <person name="Takemoto K."/>
            <person name="Wada C."/>
            <person name="Yamamoto Y."/>
            <person name="Yano M."/>
            <person name="Horiuchi T."/>
        </authorList>
    </citation>
    <scope>NUCLEOTIDE SEQUENCE [LARGE SCALE GENOMIC DNA]</scope>
    <source>
        <strain>K12 / W3110 / ATCC 27325 / DSM 5911</strain>
    </source>
</reference>
<reference key="3">
    <citation type="journal article" date="1997" name="Science">
        <title>The complete genome sequence of Escherichia coli K-12.</title>
        <authorList>
            <person name="Blattner F.R."/>
            <person name="Plunkett G. III"/>
            <person name="Bloch C.A."/>
            <person name="Perna N.T."/>
            <person name="Burland V."/>
            <person name="Riley M."/>
            <person name="Collado-Vides J."/>
            <person name="Glasner J.D."/>
            <person name="Rode C.K."/>
            <person name="Mayhew G.F."/>
            <person name="Gregor J."/>
            <person name="Davis N.W."/>
            <person name="Kirkpatrick H.A."/>
            <person name="Goeden M.A."/>
            <person name="Rose D.J."/>
            <person name="Mau B."/>
            <person name="Shao Y."/>
        </authorList>
    </citation>
    <scope>NUCLEOTIDE SEQUENCE [LARGE SCALE GENOMIC DNA]</scope>
    <source>
        <strain>K12 / MG1655 / ATCC 47076</strain>
    </source>
</reference>
<reference key="4">
    <citation type="journal article" date="2006" name="Mol. Syst. Biol.">
        <title>Highly accurate genome sequences of Escherichia coli K-12 strains MG1655 and W3110.</title>
        <authorList>
            <person name="Hayashi K."/>
            <person name="Morooka N."/>
            <person name="Yamamoto Y."/>
            <person name="Fujita K."/>
            <person name="Isono K."/>
            <person name="Choi S."/>
            <person name="Ohtsubo E."/>
            <person name="Baba T."/>
            <person name="Wanner B.L."/>
            <person name="Mori H."/>
            <person name="Horiuchi T."/>
        </authorList>
    </citation>
    <scope>NUCLEOTIDE SEQUENCE [LARGE SCALE GENOMIC DNA]</scope>
    <source>
        <strain>K12 / W3110 / ATCC 27325 / DSM 5911</strain>
    </source>
</reference>
<reference key="5">
    <citation type="journal article" date="1994" name="J. Bacteriol.">
        <title>The torR gene of Escherichia coli encodes a response regulator protein involved in the expression of the trimethylamine N-oxide reductase genes.</title>
        <authorList>
            <person name="Simon G."/>
            <person name="Mejean V."/>
            <person name="Jourlin C."/>
            <person name="Chippaux M."/>
            <person name="Pascal M.-C."/>
        </authorList>
    </citation>
    <scope>NUCLEOTIDE SEQUENCE [GENOMIC DNA] OF 1-114</scope>
    <source>
        <strain>K12 / MC4100 / ATCC 35695 / DSM 6574</strain>
    </source>
</reference>
<reference key="6">
    <citation type="journal article" date="1997" name="J. Mol. Biol.">
        <title>Transphosphorylation of the TorR response regulator requires the three phosphorylation sites of the TorS unorthodox sensor in Escherichia coli.</title>
        <authorList>
            <person name="Jourlin C."/>
            <person name="Ansaldi M."/>
            <person name="Mejean V."/>
        </authorList>
    </citation>
    <scope>MUTAGENESIS OF HIS-453; ASP-733 AND HIS-860</scope>
</reference>
<reference key="7">
    <citation type="journal article" date="2001" name="J. Bacteriol.">
        <title>Rapid dephosphorylation of the TorR response regulator by the TorS unorthodox sensor in Escherichia coli.</title>
        <authorList>
            <person name="Ansaldi M."/>
            <person name="Jourlin-Castelli C."/>
            <person name="Lepelletier M."/>
            <person name="Theraulaz L."/>
            <person name="Mejean V."/>
        </authorList>
    </citation>
    <scope>CHARACTERIZATION</scope>
</reference>
<reference key="8">
    <citation type="journal article" date="2005" name="Science">
        <title>Global topology analysis of the Escherichia coli inner membrane proteome.</title>
        <authorList>
            <person name="Daley D.O."/>
            <person name="Rapp M."/>
            <person name="Granseth E."/>
            <person name="Melen K."/>
            <person name="Drew D."/>
            <person name="von Heijne G."/>
        </authorList>
    </citation>
    <scope>SUBCELLULAR LOCATION</scope>
    <source>
        <strain>K12 / MG1655 / ATCC 47076</strain>
    </source>
</reference>